<keyword id="KW-0165">Cleavage on pair of basic residues</keyword>
<keyword id="KW-1015">Disulfide bond</keyword>
<keyword id="KW-0964">Secreted</keyword>
<keyword id="KW-0732">Signal</keyword>
<keyword id="KW-0800">Toxin</keyword>
<reference key="1">
    <citation type="journal article" date="2015" name="Genome Biol. Evol.">
        <title>Molecular diversity and gene evolution of the venom arsenal of Terebridae predatory marine snails.</title>
        <authorList>
            <person name="Gorson J."/>
            <person name="Ramrattan G."/>
            <person name="Verdes A."/>
            <person name="Wright E.M."/>
            <person name="Kantor Y."/>
            <person name="Rajaram Srinivasan R."/>
            <person name="Musunuri R."/>
            <person name="Packer D."/>
            <person name="Albano G."/>
            <person name="Qiu W.G."/>
            <person name="Holford M."/>
        </authorList>
    </citation>
    <scope>NUCLEOTIDE SEQUENCE [MRNA]</scope>
    <source>
        <tissue>Venom duct</tissue>
    </source>
</reference>
<proteinExistence type="inferred from homology"/>
<feature type="signal peptide" evidence="1">
    <location>
        <begin position="1"/>
        <end position="21"/>
    </location>
</feature>
<feature type="propeptide" id="PRO_0000435052" evidence="3">
    <location>
        <begin position="22"/>
        <end position="27"/>
    </location>
</feature>
<feature type="chain" id="PRO_0000435053" description="Tan_10cys">
    <location>
        <begin position="28"/>
        <end position="87"/>
    </location>
</feature>
<accession>P0DN44</accession>
<organism>
    <name type="scientific">Terebra anilis</name>
    <name type="common">Auger snail</name>
    <name type="synonym">Cinguloterebra anilis</name>
    <dbReference type="NCBI Taxonomy" id="553697"/>
    <lineage>
        <taxon>Eukaryota</taxon>
        <taxon>Metazoa</taxon>
        <taxon>Spiralia</taxon>
        <taxon>Lophotrochozoa</taxon>
        <taxon>Mollusca</taxon>
        <taxon>Gastropoda</taxon>
        <taxon>Caenogastropoda</taxon>
        <taxon>Neogastropoda</taxon>
        <taxon>Conoidea</taxon>
        <taxon>Terebridae</taxon>
        <taxon>Terebra</taxon>
    </lineage>
</organism>
<name>TAC_TERAN</name>
<evidence type="ECO:0000255" key="1"/>
<evidence type="ECO:0000303" key="2">
    <source>
    </source>
</evidence>
<evidence type="ECO:0000305" key="3"/>
<evidence type="ECO:0000305" key="4">
    <source>
    </source>
</evidence>
<sequence length="87" mass="9914">MNLKVLFLLAMVLVTLCLGEDRVTDRRQLCKCCAKLCHEDRDRTIPCSGGNSQFCEFCKRTKQKIRKDCNTQNEAKALCVGYFTGEC</sequence>
<comment type="subcellular location">
    <subcellularLocation>
        <location evidence="4">Secreted</location>
    </subcellularLocation>
</comment>
<comment type="tissue specificity">
    <text evidence="4">Expressed by the venom duct.</text>
</comment>
<comment type="domain">
    <text>The cysteine framework is C-CC-C-C-C-C-C-C-C.</text>
</comment>
<comment type="PTM">
    <text evidence="3">Contains 5 disulfide bonds.</text>
</comment>
<comment type="similarity">
    <text>Belongs to the teretoxin C (TC) superfamily.</text>
</comment>
<protein>
    <recommendedName>
        <fullName evidence="2">Tan_10cys</fullName>
    </recommendedName>
</protein>
<dbReference type="GO" id="GO:0005576">
    <property type="term" value="C:extracellular region"/>
    <property type="evidence" value="ECO:0007669"/>
    <property type="project" value="UniProtKB-SubCell"/>
</dbReference>
<dbReference type="GO" id="GO:0090729">
    <property type="term" value="F:toxin activity"/>
    <property type="evidence" value="ECO:0007669"/>
    <property type="project" value="UniProtKB-KW"/>
</dbReference>